<organism>
    <name type="scientific">Shewanella loihica (strain ATCC BAA-1088 / PV-4)</name>
    <dbReference type="NCBI Taxonomy" id="323850"/>
    <lineage>
        <taxon>Bacteria</taxon>
        <taxon>Pseudomonadati</taxon>
        <taxon>Pseudomonadota</taxon>
        <taxon>Gammaproteobacteria</taxon>
        <taxon>Alteromonadales</taxon>
        <taxon>Shewanellaceae</taxon>
        <taxon>Shewanella</taxon>
    </lineage>
</organism>
<evidence type="ECO:0000255" key="1">
    <source>
        <dbReference type="HAMAP-Rule" id="MF_00158"/>
    </source>
</evidence>
<dbReference type="EC" id="6.3.2.1" evidence="1"/>
<dbReference type="EMBL" id="CP000606">
    <property type="protein sequence ID" value="ABO25000.1"/>
    <property type="molecule type" value="Genomic_DNA"/>
</dbReference>
<dbReference type="RefSeq" id="WP_011866930.1">
    <property type="nucleotide sequence ID" value="NC_009092.1"/>
</dbReference>
<dbReference type="SMR" id="A3QHQ2"/>
<dbReference type="STRING" id="323850.Shew_3134"/>
<dbReference type="KEGG" id="slo:Shew_3134"/>
<dbReference type="eggNOG" id="COG0414">
    <property type="taxonomic scope" value="Bacteria"/>
</dbReference>
<dbReference type="HOGENOM" id="CLU_047148_0_0_6"/>
<dbReference type="OrthoDB" id="9773087at2"/>
<dbReference type="UniPathway" id="UPA00028">
    <property type="reaction ID" value="UER00005"/>
</dbReference>
<dbReference type="Proteomes" id="UP000001558">
    <property type="component" value="Chromosome"/>
</dbReference>
<dbReference type="GO" id="GO:0005829">
    <property type="term" value="C:cytosol"/>
    <property type="evidence" value="ECO:0007669"/>
    <property type="project" value="TreeGrafter"/>
</dbReference>
<dbReference type="GO" id="GO:0005524">
    <property type="term" value="F:ATP binding"/>
    <property type="evidence" value="ECO:0007669"/>
    <property type="project" value="UniProtKB-KW"/>
</dbReference>
<dbReference type="GO" id="GO:0004592">
    <property type="term" value="F:pantoate-beta-alanine ligase activity"/>
    <property type="evidence" value="ECO:0007669"/>
    <property type="project" value="UniProtKB-UniRule"/>
</dbReference>
<dbReference type="GO" id="GO:0015940">
    <property type="term" value="P:pantothenate biosynthetic process"/>
    <property type="evidence" value="ECO:0007669"/>
    <property type="project" value="UniProtKB-UniRule"/>
</dbReference>
<dbReference type="CDD" id="cd00560">
    <property type="entry name" value="PanC"/>
    <property type="match status" value="1"/>
</dbReference>
<dbReference type="FunFam" id="3.40.50.620:FF:000013">
    <property type="entry name" value="Pantothenate synthetase"/>
    <property type="match status" value="1"/>
</dbReference>
<dbReference type="Gene3D" id="3.40.50.620">
    <property type="entry name" value="HUPs"/>
    <property type="match status" value="1"/>
</dbReference>
<dbReference type="Gene3D" id="3.30.1300.10">
    <property type="entry name" value="Pantoate-beta-alanine ligase, C-terminal domain"/>
    <property type="match status" value="1"/>
</dbReference>
<dbReference type="HAMAP" id="MF_00158">
    <property type="entry name" value="PanC"/>
    <property type="match status" value="1"/>
</dbReference>
<dbReference type="InterPro" id="IPR004821">
    <property type="entry name" value="Cyt_trans-like"/>
</dbReference>
<dbReference type="InterPro" id="IPR003721">
    <property type="entry name" value="Pantoate_ligase"/>
</dbReference>
<dbReference type="InterPro" id="IPR042176">
    <property type="entry name" value="Pantoate_ligase_C"/>
</dbReference>
<dbReference type="InterPro" id="IPR014729">
    <property type="entry name" value="Rossmann-like_a/b/a_fold"/>
</dbReference>
<dbReference type="NCBIfam" id="TIGR00125">
    <property type="entry name" value="cyt_tran_rel"/>
    <property type="match status" value="1"/>
</dbReference>
<dbReference type="NCBIfam" id="TIGR00018">
    <property type="entry name" value="panC"/>
    <property type="match status" value="1"/>
</dbReference>
<dbReference type="PANTHER" id="PTHR21299">
    <property type="entry name" value="CYTIDYLATE KINASE/PANTOATE-BETA-ALANINE LIGASE"/>
    <property type="match status" value="1"/>
</dbReference>
<dbReference type="PANTHER" id="PTHR21299:SF1">
    <property type="entry name" value="PANTOATE--BETA-ALANINE LIGASE"/>
    <property type="match status" value="1"/>
</dbReference>
<dbReference type="Pfam" id="PF02569">
    <property type="entry name" value="Pantoate_ligase"/>
    <property type="match status" value="1"/>
</dbReference>
<dbReference type="SUPFAM" id="SSF52374">
    <property type="entry name" value="Nucleotidylyl transferase"/>
    <property type="match status" value="1"/>
</dbReference>
<name>PANC_SHELP</name>
<comment type="function">
    <text evidence="1">Catalyzes the condensation of pantoate with beta-alanine in an ATP-dependent reaction via a pantoyl-adenylate intermediate.</text>
</comment>
<comment type="catalytic activity">
    <reaction evidence="1">
        <text>(R)-pantoate + beta-alanine + ATP = (R)-pantothenate + AMP + diphosphate + H(+)</text>
        <dbReference type="Rhea" id="RHEA:10912"/>
        <dbReference type="ChEBI" id="CHEBI:15378"/>
        <dbReference type="ChEBI" id="CHEBI:15980"/>
        <dbReference type="ChEBI" id="CHEBI:29032"/>
        <dbReference type="ChEBI" id="CHEBI:30616"/>
        <dbReference type="ChEBI" id="CHEBI:33019"/>
        <dbReference type="ChEBI" id="CHEBI:57966"/>
        <dbReference type="ChEBI" id="CHEBI:456215"/>
        <dbReference type="EC" id="6.3.2.1"/>
    </reaction>
</comment>
<comment type="pathway">
    <text evidence="1">Cofactor biosynthesis; (R)-pantothenate biosynthesis; (R)-pantothenate from (R)-pantoate and beta-alanine: step 1/1.</text>
</comment>
<comment type="subunit">
    <text evidence="1">Homodimer.</text>
</comment>
<comment type="subcellular location">
    <subcellularLocation>
        <location evidence="1">Cytoplasm</location>
    </subcellularLocation>
</comment>
<comment type="miscellaneous">
    <text evidence="1">The reaction proceeds by a bi uni uni bi ping pong mechanism.</text>
</comment>
<comment type="similarity">
    <text evidence="1">Belongs to the pantothenate synthetase family.</text>
</comment>
<sequence length="282" mass="30921">MYTTQDIAAIRTQVRQWKRAGETVAFVPTMGNLHQGHITLVTEALKRADHVVVSIFVNPMQFGQNEDLDAYPRTLAADQAALEAAGAELLFTPTPAIIYPKGMDKQTFVEVPGLSEELCGASRPGHFRGVATIVCKLFNIVQPDVALFGKKDFQQLMVIKAMVEDLSLPIEIVGVDTIRESSGLAMSSRNGYLSEAQKQQAAQLKRTLDEMAEAIAKGQAIPNVVRHAQEQLHQAGFKPDYLSVRNAADLREAQDSDKQLVILAAAFMGSTRLIDNLSFERA</sequence>
<protein>
    <recommendedName>
        <fullName evidence="1">Pantothenate synthetase</fullName>
        <shortName evidence="1">PS</shortName>
        <ecNumber evidence="1">6.3.2.1</ecNumber>
    </recommendedName>
    <alternativeName>
        <fullName evidence="1">Pantoate--beta-alanine ligase</fullName>
    </alternativeName>
    <alternativeName>
        <fullName evidence="1">Pantoate-activating enzyme</fullName>
    </alternativeName>
</protein>
<gene>
    <name evidence="1" type="primary">panC</name>
    <name type="ordered locus">Shew_3134</name>
</gene>
<proteinExistence type="inferred from homology"/>
<accession>A3QHQ2</accession>
<feature type="chain" id="PRO_0000305547" description="Pantothenate synthetase">
    <location>
        <begin position="1"/>
        <end position="282"/>
    </location>
</feature>
<feature type="active site" description="Proton donor" evidence="1">
    <location>
        <position position="37"/>
    </location>
</feature>
<feature type="binding site" evidence="1">
    <location>
        <begin position="30"/>
        <end position="37"/>
    </location>
    <ligand>
        <name>ATP</name>
        <dbReference type="ChEBI" id="CHEBI:30616"/>
    </ligand>
</feature>
<feature type="binding site" evidence="1">
    <location>
        <position position="61"/>
    </location>
    <ligand>
        <name>(R)-pantoate</name>
        <dbReference type="ChEBI" id="CHEBI:15980"/>
    </ligand>
</feature>
<feature type="binding site" evidence="1">
    <location>
        <position position="61"/>
    </location>
    <ligand>
        <name>beta-alanine</name>
        <dbReference type="ChEBI" id="CHEBI:57966"/>
    </ligand>
</feature>
<feature type="binding site" evidence="1">
    <location>
        <begin position="149"/>
        <end position="152"/>
    </location>
    <ligand>
        <name>ATP</name>
        <dbReference type="ChEBI" id="CHEBI:30616"/>
    </ligand>
</feature>
<feature type="binding site" evidence="1">
    <location>
        <position position="155"/>
    </location>
    <ligand>
        <name>(R)-pantoate</name>
        <dbReference type="ChEBI" id="CHEBI:15980"/>
    </ligand>
</feature>
<feature type="binding site" evidence="1">
    <location>
        <position position="178"/>
    </location>
    <ligand>
        <name>ATP</name>
        <dbReference type="ChEBI" id="CHEBI:30616"/>
    </ligand>
</feature>
<feature type="binding site" evidence="1">
    <location>
        <begin position="186"/>
        <end position="189"/>
    </location>
    <ligand>
        <name>ATP</name>
        <dbReference type="ChEBI" id="CHEBI:30616"/>
    </ligand>
</feature>
<keyword id="KW-0067">ATP-binding</keyword>
<keyword id="KW-0963">Cytoplasm</keyword>
<keyword id="KW-0436">Ligase</keyword>
<keyword id="KW-0547">Nucleotide-binding</keyword>
<keyword id="KW-0566">Pantothenate biosynthesis</keyword>
<keyword id="KW-1185">Reference proteome</keyword>
<reference key="1">
    <citation type="submission" date="2007-03" db="EMBL/GenBank/DDBJ databases">
        <title>Complete sequence of Shewanella loihica PV-4.</title>
        <authorList>
            <consortium name="US DOE Joint Genome Institute"/>
            <person name="Copeland A."/>
            <person name="Lucas S."/>
            <person name="Lapidus A."/>
            <person name="Barry K."/>
            <person name="Detter J.C."/>
            <person name="Glavina del Rio T."/>
            <person name="Hammon N."/>
            <person name="Israni S."/>
            <person name="Dalin E."/>
            <person name="Tice H."/>
            <person name="Pitluck S."/>
            <person name="Chain P."/>
            <person name="Malfatti S."/>
            <person name="Shin M."/>
            <person name="Vergez L."/>
            <person name="Schmutz J."/>
            <person name="Larimer F."/>
            <person name="Land M."/>
            <person name="Hauser L."/>
            <person name="Kyrpides N."/>
            <person name="Mikhailova N."/>
            <person name="Romine M.F."/>
            <person name="Serres G."/>
            <person name="Fredrickson J."/>
            <person name="Tiedje J."/>
            <person name="Richardson P."/>
        </authorList>
    </citation>
    <scope>NUCLEOTIDE SEQUENCE [LARGE SCALE GENOMIC DNA]</scope>
    <source>
        <strain>ATCC BAA-1088 / PV-4</strain>
    </source>
</reference>